<comment type="function">
    <text evidence="1">Catalyzes amidations at positions B, D, E, and G on adenosylcobyrinic A,C-diamide. NH(2) groups are provided by glutamine, and one molecule of ATP is hydrogenolyzed for each amidation.</text>
</comment>
<comment type="pathway">
    <text evidence="1">Cofactor biosynthesis; adenosylcobalamin biosynthesis.</text>
</comment>
<comment type="similarity">
    <text evidence="1">Belongs to the CobB/CobQ family. CobQ subfamily.</text>
</comment>
<accession>Q2JJP4</accession>
<dbReference type="EMBL" id="CP000240">
    <property type="protein sequence ID" value="ABD03118.1"/>
    <property type="molecule type" value="Genomic_DNA"/>
</dbReference>
<dbReference type="SMR" id="Q2JJP4"/>
<dbReference type="STRING" id="321332.CYB_2173"/>
<dbReference type="KEGG" id="cyb:CYB_2173"/>
<dbReference type="eggNOG" id="COG1492">
    <property type="taxonomic scope" value="Bacteria"/>
</dbReference>
<dbReference type="HOGENOM" id="CLU_019250_2_2_3"/>
<dbReference type="OrthoDB" id="9808302at2"/>
<dbReference type="UniPathway" id="UPA00148"/>
<dbReference type="Proteomes" id="UP000001938">
    <property type="component" value="Chromosome"/>
</dbReference>
<dbReference type="GO" id="GO:0015420">
    <property type="term" value="F:ABC-type vitamin B12 transporter activity"/>
    <property type="evidence" value="ECO:0007669"/>
    <property type="project" value="UniProtKB-UniRule"/>
</dbReference>
<dbReference type="GO" id="GO:0016887">
    <property type="term" value="F:ATP hydrolysis activity"/>
    <property type="evidence" value="ECO:0007669"/>
    <property type="project" value="InterPro"/>
</dbReference>
<dbReference type="GO" id="GO:0009236">
    <property type="term" value="P:cobalamin biosynthetic process"/>
    <property type="evidence" value="ECO:0007669"/>
    <property type="project" value="UniProtKB-UniRule"/>
</dbReference>
<dbReference type="CDD" id="cd05389">
    <property type="entry name" value="CobQ_N"/>
    <property type="match status" value="1"/>
</dbReference>
<dbReference type="CDD" id="cd01750">
    <property type="entry name" value="GATase1_CobQ"/>
    <property type="match status" value="1"/>
</dbReference>
<dbReference type="Gene3D" id="3.40.50.880">
    <property type="match status" value="1"/>
</dbReference>
<dbReference type="Gene3D" id="3.40.50.300">
    <property type="entry name" value="P-loop containing nucleotide triphosphate hydrolases"/>
    <property type="match status" value="1"/>
</dbReference>
<dbReference type="HAMAP" id="MF_00028">
    <property type="entry name" value="CobQ"/>
    <property type="match status" value="1"/>
</dbReference>
<dbReference type="InterPro" id="IPR003593">
    <property type="entry name" value="AAA+_ATPase"/>
</dbReference>
<dbReference type="InterPro" id="IPR029062">
    <property type="entry name" value="Class_I_gatase-like"/>
</dbReference>
<dbReference type="InterPro" id="IPR002586">
    <property type="entry name" value="CobQ/CobB/MinD/ParA_Nub-bd_dom"/>
</dbReference>
<dbReference type="InterPro" id="IPR033949">
    <property type="entry name" value="CobQ_GATase1"/>
</dbReference>
<dbReference type="InterPro" id="IPR047045">
    <property type="entry name" value="CobQ_N"/>
</dbReference>
<dbReference type="InterPro" id="IPR004459">
    <property type="entry name" value="CobQ_synth"/>
</dbReference>
<dbReference type="InterPro" id="IPR011698">
    <property type="entry name" value="GATase_3"/>
</dbReference>
<dbReference type="InterPro" id="IPR027417">
    <property type="entry name" value="P-loop_NTPase"/>
</dbReference>
<dbReference type="NCBIfam" id="TIGR00313">
    <property type="entry name" value="cobQ"/>
    <property type="match status" value="1"/>
</dbReference>
<dbReference type="NCBIfam" id="NF001989">
    <property type="entry name" value="PRK00784.1"/>
    <property type="match status" value="1"/>
</dbReference>
<dbReference type="PANTHER" id="PTHR21343:SF1">
    <property type="entry name" value="COBYRIC ACID SYNTHASE"/>
    <property type="match status" value="1"/>
</dbReference>
<dbReference type="PANTHER" id="PTHR21343">
    <property type="entry name" value="DETHIOBIOTIN SYNTHETASE"/>
    <property type="match status" value="1"/>
</dbReference>
<dbReference type="Pfam" id="PF01656">
    <property type="entry name" value="CbiA"/>
    <property type="match status" value="1"/>
</dbReference>
<dbReference type="Pfam" id="PF07685">
    <property type="entry name" value="GATase_3"/>
    <property type="match status" value="1"/>
</dbReference>
<dbReference type="SMART" id="SM00382">
    <property type="entry name" value="AAA"/>
    <property type="match status" value="1"/>
</dbReference>
<dbReference type="SUPFAM" id="SSF52317">
    <property type="entry name" value="Class I glutamine amidotransferase-like"/>
    <property type="match status" value="1"/>
</dbReference>
<dbReference type="SUPFAM" id="SSF52540">
    <property type="entry name" value="P-loop containing nucleoside triphosphate hydrolases"/>
    <property type="match status" value="1"/>
</dbReference>
<dbReference type="PROSITE" id="PS51274">
    <property type="entry name" value="GATASE_COBBQ"/>
    <property type="match status" value="1"/>
</dbReference>
<gene>
    <name evidence="1" type="primary">cobQ</name>
    <name type="ordered locus">CYB_2173</name>
</gene>
<organism>
    <name type="scientific">Synechococcus sp. (strain JA-2-3B'a(2-13))</name>
    <name type="common">Cyanobacteria bacterium Yellowstone B-Prime</name>
    <dbReference type="NCBI Taxonomy" id="321332"/>
    <lineage>
        <taxon>Bacteria</taxon>
        <taxon>Bacillati</taxon>
        <taxon>Cyanobacteriota</taxon>
        <taxon>Cyanophyceae</taxon>
        <taxon>Synechococcales</taxon>
        <taxon>Synechococcaceae</taxon>
        <taxon>Synechococcus</taxon>
    </lineage>
</organism>
<protein>
    <recommendedName>
        <fullName evidence="1">Cobyric acid synthase</fullName>
    </recommendedName>
</protein>
<proteinExistence type="inferred from homology"/>
<reference key="1">
    <citation type="journal article" date="2007" name="ISME J.">
        <title>Population level functional diversity in a microbial community revealed by comparative genomic and metagenomic analyses.</title>
        <authorList>
            <person name="Bhaya D."/>
            <person name="Grossman A.R."/>
            <person name="Steunou A.-S."/>
            <person name="Khuri N."/>
            <person name="Cohan F.M."/>
            <person name="Hamamura N."/>
            <person name="Melendrez M.C."/>
            <person name="Bateson M.M."/>
            <person name="Ward D.M."/>
            <person name="Heidelberg J.F."/>
        </authorList>
    </citation>
    <scope>NUCLEOTIDE SEQUENCE [LARGE SCALE GENOMIC DNA]</scope>
    <source>
        <strain>JA-2-3B'a(2-13)</strain>
    </source>
</reference>
<evidence type="ECO:0000255" key="1">
    <source>
        <dbReference type="HAMAP-Rule" id="MF_00028"/>
    </source>
</evidence>
<sequence>MSCSGRSLMVVGTSSHVGKTLLVTALCRILKKAGKRVAPFKAQNMSLNAYVTPDGKEIAYAQALQAWAAGIPPAVEMNPILLKPQGNLTSQIVLNGVAVGTYRAGEYYERWFAPAWQAVKEALARLQKQYDWILCEGAGSPAEVNLKHRDLANMRVALHLGSPTWLVADIDRGGALAHVVGTLQLLEPEERALIRGIVINKFRGSRELLQPGLDWLENYTGIPVVGVLPWVDWVLPQEDSMGIAANPLLWEDRRDRAGGQALREGRLEIAVVRLPQVANFSDFDPLLAEPTVHLRWVHPGQSLGSPDVVILPGSKTTLNDLFALQKTGLAEQLRQYSGHIVGICGGLQMLGETIADPEGWEGIAGTYSGLGFLPLTTVLQPTKVTQQVQTQSRWPALAPIQGYEIHQGSTQADPSGCLPLFDRENLGWRDPTGRIWGSYLHGLFDNHLWRRQWLNWLRRQKGWDPLPELEGHYAQQREQLLERLADLWQPHLDLGLLME</sequence>
<feature type="chain" id="PRO_0000332393" description="Cobyric acid synthase">
    <location>
        <begin position="1"/>
        <end position="499"/>
    </location>
</feature>
<feature type="domain" description="GATase cobBQ-type" evidence="1">
    <location>
        <begin position="266"/>
        <end position="449"/>
    </location>
</feature>
<feature type="active site" description="Nucleophile" evidence="1">
    <location>
        <position position="344"/>
    </location>
</feature>
<feature type="active site" evidence="1">
    <location>
        <position position="441"/>
    </location>
</feature>
<name>COBQ_SYNJB</name>
<keyword id="KW-0169">Cobalamin biosynthesis</keyword>
<keyword id="KW-0315">Glutamine amidotransferase</keyword>
<keyword id="KW-1185">Reference proteome</keyword>